<keyword id="KW-0002">3D-structure</keyword>
<keyword id="KW-0963">Cytoplasm</keyword>
<keyword id="KW-0378">Hydrolase</keyword>
<keyword id="KW-0479">Metal-binding</keyword>
<keyword id="KW-0539">Nucleus</keyword>
<keyword id="KW-1267">Proteomics identification</keyword>
<keyword id="KW-1185">Reference proteome</keyword>
<keyword id="KW-0862">Zinc</keyword>
<protein>
    <recommendedName>
        <fullName>Metallo-beta-lactamase domain-containing protein 1</fullName>
        <ecNumber evidence="3">3.1.27.-</ecNumber>
    </recommendedName>
    <alternativeName>
        <fullName evidence="5">Endoribonuclease MBLAC1</fullName>
    </alternativeName>
</protein>
<reference key="1">
    <citation type="journal article" date="2003" name="Science">
        <title>Human chromosome 7: DNA sequence and biology.</title>
        <authorList>
            <person name="Scherer S.W."/>
            <person name="Cheung J."/>
            <person name="MacDonald J.R."/>
            <person name="Osborne L.R."/>
            <person name="Nakabayashi K."/>
            <person name="Herbrick J.-A."/>
            <person name="Carson A.R."/>
            <person name="Parker-Katiraee L."/>
            <person name="Skaug J."/>
            <person name="Khaja R."/>
            <person name="Zhang J."/>
            <person name="Hudek A.K."/>
            <person name="Li M."/>
            <person name="Haddad M."/>
            <person name="Duggan G.E."/>
            <person name="Fernandez B.A."/>
            <person name="Kanematsu E."/>
            <person name="Gentles S."/>
            <person name="Christopoulos C.C."/>
            <person name="Choufani S."/>
            <person name="Kwasnicka D."/>
            <person name="Zheng X.H."/>
            <person name="Lai Z."/>
            <person name="Nusskern D.R."/>
            <person name="Zhang Q."/>
            <person name="Gu Z."/>
            <person name="Lu F."/>
            <person name="Zeesman S."/>
            <person name="Nowaczyk M.J."/>
            <person name="Teshima I."/>
            <person name="Chitayat D."/>
            <person name="Shuman C."/>
            <person name="Weksberg R."/>
            <person name="Zackai E.H."/>
            <person name="Grebe T.A."/>
            <person name="Cox S.R."/>
            <person name="Kirkpatrick S.J."/>
            <person name="Rahman N."/>
            <person name="Friedman J.M."/>
            <person name="Heng H.H.Q."/>
            <person name="Pelicci P.G."/>
            <person name="Lo-Coco F."/>
            <person name="Belloni E."/>
            <person name="Shaffer L.G."/>
            <person name="Pober B."/>
            <person name="Morton C.C."/>
            <person name="Gusella J.F."/>
            <person name="Bruns G.A.P."/>
            <person name="Korf B.R."/>
            <person name="Quade B.J."/>
            <person name="Ligon A.H."/>
            <person name="Ferguson H."/>
            <person name="Higgins A.W."/>
            <person name="Leach N.T."/>
            <person name="Herrick S.R."/>
            <person name="Lemyre E."/>
            <person name="Farra C.G."/>
            <person name="Kim H.-G."/>
            <person name="Summers A.M."/>
            <person name="Gripp K.W."/>
            <person name="Roberts W."/>
            <person name="Szatmari P."/>
            <person name="Winsor E.J.T."/>
            <person name="Grzeschik K.-H."/>
            <person name="Teebi A."/>
            <person name="Minassian B.A."/>
            <person name="Kere J."/>
            <person name="Armengol L."/>
            <person name="Pujana M.A."/>
            <person name="Estivill X."/>
            <person name="Wilson M.D."/>
            <person name="Koop B.F."/>
            <person name="Tosi S."/>
            <person name="Moore G.E."/>
            <person name="Boright A.P."/>
            <person name="Zlotorynski E."/>
            <person name="Kerem B."/>
            <person name="Kroisel P.M."/>
            <person name="Petek E."/>
            <person name="Oscier D.G."/>
            <person name="Mould S.J."/>
            <person name="Doehner H."/>
            <person name="Doehner K."/>
            <person name="Rommens J.M."/>
            <person name="Vincent J.B."/>
            <person name="Venter J.C."/>
            <person name="Li P.W."/>
            <person name="Mural R.J."/>
            <person name="Adams M.D."/>
            <person name="Tsui L.-C."/>
        </authorList>
    </citation>
    <scope>NUCLEOTIDE SEQUENCE [LARGE SCALE GENOMIC DNA]</scope>
</reference>
<reference key="2">
    <citation type="submission" date="2005-09" db="EMBL/GenBank/DDBJ databases">
        <authorList>
            <person name="Mural R.J."/>
            <person name="Istrail S."/>
            <person name="Sutton G.G."/>
            <person name="Florea L."/>
            <person name="Halpern A.L."/>
            <person name="Mobarry C.M."/>
            <person name="Lippert R."/>
            <person name="Walenz B."/>
            <person name="Shatkay H."/>
            <person name="Dew I."/>
            <person name="Miller J.R."/>
            <person name="Flanigan M.J."/>
            <person name="Edwards N.J."/>
            <person name="Bolanos R."/>
            <person name="Fasulo D."/>
            <person name="Halldorsson B.V."/>
            <person name="Hannenhalli S."/>
            <person name="Turner R."/>
            <person name="Yooseph S."/>
            <person name="Lu F."/>
            <person name="Nusskern D.R."/>
            <person name="Shue B.C."/>
            <person name="Zheng X.H."/>
            <person name="Zhong F."/>
            <person name="Delcher A.L."/>
            <person name="Huson D.H."/>
            <person name="Kravitz S.A."/>
            <person name="Mouchard L."/>
            <person name="Reinert K."/>
            <person name="Remington K.A."/>
            <person name="Clark A.G."/>
            <person name="Waterman M.S."/>
            <person name="Eichler E.E."/>
            <person name="Adams M.D."/>
            <person name="Hunkapiller M.W."/>
            <person name="Myers E.W."/>
            <person name="Venter J.C."/>
        </authorList>
    </citation>
    <scope>NUCLEOTIDE SEQUENCE [LARGE SCALE GENOMIC DNA]</scope>
</reference>
<reference key="3">
    <citation type="journal article" date="2004" name="Genome Res.">
        <title>The status, quality, and expansion of the NIH full-length cDNA project: the Mammalian Gene Collection (MGC).</title>
        <authorList>
            <consortium name="The MGC Project Team"/>
        </authorList>
    </citation>
    <scope>NUCLEOTIDE SEQUENCE [LARGE SCALE MRNA]</scope>
    <scope>VARIANTS HIS-79 AND ASN-114</scope>
    <source>
        <tissue>Brain</tissue>
    </source>
</reference>
<reference key="4">
    <citation type="journal article" date="2011" name="Sci. Signal.">
        <title>System-wide temporal characterization of the proteome and phosphoproteome of human embryonic stem cell differentiation.</title>
        <authorList>
            <person name="Rigbolt K.T."/>
            <person name="Prokhorova T.A."/>
            <person name="Akimov V."/>
            <person name="Henningsen J."/>
            <person name="Johansen P.T."/>
            <person name="Kratchmarova I."/>
            <person name="Kassem M."/>
            <person name="Mann M."/>
            <person name="Olsen J.V."/>
            <person name="Blagoev B."/>
        </authorList>
    </citation>
    <scope>IDENTIFICATION BY MASS SPECTROMETRY [LARGE SCALE ANALYSIS]</scope>
</reference>
<reference evidence="7" key="5">
    <citation type="journal article" date="2018" name="Elife">
        <title>Biosynthesis of histone messenger RNA employs a specific 3' end endonuclease.</title>
        <authorList>
            <person name="Pettinati I."/>
            <person name="Grzechnik P."/>
            <person name="Ribeiro de Almeida C."/>
            <person name="Brem J."/>
            <person name="McDonough M.A."/>
            <person name="Dhir S."/>
            <person name="Proudfoot N.J."/>
            <person name="Schofield C.J."/>
        </authorList>
    </citation>
    <scope>X-RAY CRYSTALLOGRAPHY (1.79 ANGSTROMS) IN COMPLEX WITH IRON</scope>
    <scope>FUNCTION</scope>
    <scope>CATALYTIC ACTIVITY</scope>
    <scope>SUBCELLULAR LOCATION</scope>
    <scope>SUBUNIT</scope>
    <scope>DOMAIN</scope>
    <scope>MUTAGENESIS OF HIS-169; ASP-192 AND HIS-231</scope>
    <scope>COFACTOR</scope>
</reference>
<feature type="chain" id="PRO_0000337027" description="Metallo-beta-lactamase domain-containing protein 1">
    <location>
        <begin position="1"/>
        <end position="266"/>
    </location>
</feature>
<feature type="region of interest" description="Disordered" evidence="1">
    <location>
        <begin position="48"/>
        <end position="71"/>
    </location>
</feature>
<feature type="region of interest" description="Disordered" evidence="1">
    <location>
        <begin position="229"/>
        <end position="266"/>
    </location>
</feature>
<feature type="binding site" evidence="5 7">
    <location>
        <position position="114"/>
    </location>
    <ligand>
        <name>Zn(2+)</name>
        <dbReference type="ChEBI" id="CHEBI:29105"/>
        <label>1</label>
    </ligand>
</feature>
<feature type="binding site" evidence="5 7">
    <location>
        <position position="116"/>
    </location>
    <ligand>
        <name>Zn(2+)</name>
        <dbReference type="ChEBI" id="CHEBI:29105"/>
        <label>1</label>
    </ligand>
</feature>
<feature type="binding site" evidence="5 7">
    <location>
        <position position="118"/>
    </location>
    <ligand>
        <name>Zn(2+)</name>
        <dbReference type="ChEBI" id="CHEBI:29105"/>
        <label>2</label>
    </ligand>
</feature>
<feature type="binding site" evidence="5 7">
    <location>
        <position position="119"/>
    </location>
    <ligand>
        <name>Zn(2+)</name>
        <dbReference type="ChEBI" id="CHEBI:29105"/>
        <label>2</label>
    </ligand>
</feature>
<feature type="binding site" evidence="5 7">
    <location>
        <position position="169"/>
    </location>
    <ligand>
        <name>Zn(2+)</name>
        <dbReference type="ChEBI" id="CHEBI:29105"/>
        <label>1</label>
    </ligand>
</feature>
<feature type="binding site" evidence="5 7">
    <location>
        <position position="192"/>
    </location>
    <ligand>
        <name>Zn(2+)</name>
        <dbReference type="ChEBI" id="CHEBI:29105"/>
        <label>1</label>
    </ligand>
</feature>
<feature type="binding site" evidence="5 7">
    <location>
        <position position="192"/>
    </location>
    <ligand>
        <name>Zn(2+)</name>
        <dbReference type="ChEBI" id="CHEBI:29105"/>
        <label>2</label>
    </ligand>
</feature>
<feature type="binding site" evidence="5 7">
    <location>
        <position position="231"/>
    </location>
    <ligand>
        <name>Zn(2+)</name>
        <dbReference type="ChEBI" id="CHEBI:29105"/>
        <label>2</label>
    </ligand>
</feature>
<feature type="sequence variant" id="VAR_043567" description="In dbSNP:rs17852945." evidence="2">
    <original>P</original>
    <variation>H</variation>
    <location>
        <position position="79"/>
    </location>
</feature>
<feature type="sequence variant" id="VAR_043568" description="In dbSNP:rs17852946." evidence="2">
    <original>H</original>
    <variation>N</variation>
    <location>
        <position position="114"/>
    </location>
</feature>
<feature type="mutagenesis site" description="Loss of endoribonuclease activity; when associated with A-192 and A-231." evidence="3">
    <original>H</original>
    <variation>A</variation>
    <location>
        <position position="169"/>
    </location>
</feature>
<feature type="mutagenesis site" description="Loss of endoribonuclease activity; when associated with A-169 and A-231." evidence="3">
    <original>D</original>
    <variation>A</variation>
    <location>
        <position position="192"/>
    </location>
</feature>
<feature type="mutagenesis site" description="Loss of endoribonuclease activity; when associated with A-169 and A-192." evidence="3">
    <original>H</original>
    <variation>A</variation>
    <location>
        <position position="231"/>
    </location>
</feature>
<feature type="sequence conflict" description="In Ref. 3; AAH31288." evidence="4" ref="3">
    <location>
        <position position="189"/>
    </location>
</feature>
<feature type="sequence conflict" description="In Ref. 3; AAH31288." evidence="4" ref="3">
    <original>E</original>
    <variation>K</variation>
    <location>
        <position position="245"/>
    </location>
</feature>
<feature type="strand" evidence="8">
    <location>
        <begin position="8"/>
        <end position="14"/>
    </location>
</feature>
<feature type="strand" evidence="8">
    <location>
        <begin position="16"/>
        <end position="25"/>
    </location>
</feature>
<feature type="strand" evidence="8">
    <location>
        <begin position="28"/>
        <end position="31"/>
    </location>
</feature>
<feature type="strand" evidence="8">
    <location>
        <begin position="33"/>
        <end position="36"/>
    </location>
</feature>
<feature type="strand" evidence="8">
    <location>
        <begin position="38"/>
        <end position="41"/>
    </location>
</feature>
<feature type="strand" evidence="8">
    <location>
        <begin position="44"/>
        <end position="49"/>
    </location>
</feature>
<feature type="helix" evidence="8">
    <location>
        <begin position="68"/>
        <end position="75"/>
    </location>
</feature>
<feature type="strand" evidence="8">
    <location>
        <begin position="80"/>
        <end position="82"/>
    </location>
</feature>
<feature type="helix" evidence="8">
    <location>
        <begin position="87"/>
        <end position="89"/>
    </location>
</feature>
<feature type="helix" evidence="8">
    <location>
        <begin position="90"/>
        <end position="99"/>
    </location>
</feature>
<feature type="helix" evidence="8">
    <location>
        <begin position="104"/>
        <end position="106"/>
    </location>
</feature>
<feature type="strand" evidence="8">
    <location>
        <begin position="109"/>
        <end position="114"/>
    </location>
</feature>
<feature type="turn" evidence="8">
    <location>
        <begin position="117"/>
        <end position="119"/>
    </location>
</feature>
<feature type="helix" evidence="8">
    <location>
        <begin position="123"/>
        <end position="125"/>
    </location>
</feature>
<feature type="strand" evidence="8">
    <location>
        <begin position="129"/>
        <end position="133"/>
    </location>
</feature>
<feature type="strand" evidence="8">
    <location>
        <begin position="136"/>
        <end position="139"/>
    </location>
</feature>
<feature type="turn" evidence="8">
    <location>
        <begin position="140"/>
        <end position="142"/>
    </location>
</feature>
<feature type="strand" evidence="8">
    <location>
        <begin position="155"/>
        <end position="158"/>
    </location>
</feature>
<feature type="strand" evidence="8">
    <location>
        <begin position="161"/>
        <end position="165"/>
    </location>
</feature>
<feature type="strand" evidence="8">
    <location>
        <begin position="168"/>
        <end position="171"/>
    </location>
</feature>
<feature type="strand" evidence="8">
    <location>
        <begin position="175"/>
        <end position="182"/>
    </location>
</feature>
<feature type="strand" evidence="8">
    <location>
        <begin position="185"/>
        <end position="191"/>
    </location>
</feature>
<feature type="turn" evidence="8">
    <location>
        <begin position="200"/>
        <end position="202"/>
    </location>
</feature>
<feature type="helix" evidence="8">
    <location>
        <begin position="204"/>
        <end position="206"/>
    </location>
</feature>
<feature type="helix" evidence="8">
    <location>
        <begin position="210"/>
        <end position="223"/>
    </location>
</feature>
<feature type="strand" evidence="8">
    <location>
        <begin position="225"/>
        <end position="229"/>
    </location>
</feature>
<evidence type="ECO:0000256" key="1">
    <source>
        <dbReference type="SAM" id="MobiDB-lite"/>
    </source>
</evidence>
<evidence type="ECO:0000269" key="2">
    <source>
    </source>
</evidence>
<evidence type="ECO:0000269" key="3">
    <source>
    </source>
</evidence>
<evidence type="ECO:0000305" key="4"/>
<evidence type="ECO:0000305" key="5">
    <source>
    </source>
</evidence>
<evidence type="ECO:0000312" key="6">
    <source>
        <dbReference type="HGNC" id="HGNC:22180"/>
    </source>
</evidence>
<evidence type="ECO:0007744" key="7">
    <source>
        <dbReference type="PDB" id="4V0H"/>
    </source>
</evidence>
<evidence type="ECO:0007829" key="8">
    <source>
        <dbReference type="PDB" id="4V0H"/>
    </source>
</evidence>
<dbReference type="EC" id="3.1.27.-" evidence="3"/>
<dbReference type="EMBL" id="CH236956">
    <property type="protein sequence ID" value="EAL23849.1"/>
    <property type="molecule type" value="Genomic_DNA"/>
</dbReference>
<dbReference type="EMBL" id="CH471091">
    <property type="protein sequence ID" value="EAW76587.1"/>
    <property type="molecule type" value="Genomic_DNA"/>
</dbReference>
<dbReference type="EMBL" id="BC031288">
    <property type="protein sequence ID" value="AAH31288.1"/>
    <property type="molecule type" value="mRNA"/>
</dbReference>
<dbReference type="CCDS" id="CCDS43620.1"/>
<dbReference type="RefSeq" id="NP_981942.1">
    <property type="nucleotide sequence ID" value="NM_203397.3"/>
</dbReference>
<dbReference type="RefSeq" id="XP_005250307.1">
    <property type="nucleotide sequence ID" value="XM_005250250.4"/>
</dbReference>
<dbReference type="RefSeq" id="XP_054213720.1">
    <property type="nucleotide sequence ID" value="XM_054357745.1"/>
</dbReference>
<dbReference type="PDB" id="4V0H">
    <property type="method" value="X-ray"/>
    <property type="resolution" value="1.79 A"/>
    <property type="chains" value="A/B/C/D=1-266"/>
</dbReference>
<dbReference type="PDBsum" id="4V0H"/>
<dbReference type="SMR" id="A4D2B0"/>
<dbReference type="BioGRID" id="129099">
    <property type="interactions" value="78"/>
</dbReference>
<dbReference type="FunCoup" id="A4D2B0">
    <property type="interactions" value="1063"/>
</dbReference>
<dbReference type="IntAct" id="A4D2B0">
    <property type="interactions" value="3"/>
</dbReference>
<dbReference type="STRING" id="9606.ENSP00000381150"/>
<dbReference type="iPTMnet" id="A4D2B0"/>
<dbReference type="PhosphoSitePlus" id="A4D2B0"/>
<dbReference type="BioMuta" id="MBLAC1"/>
<dbReference type="jPOST" id="A4D2B0"/>
<dbReference type="MassIVE" id="A4D2B0"/>
<dbReference type="PaxDb" id="9606-ENSP00000381150"/>
<dbReference type="PeptideAtlas" id="A4D2B0"/>
<dbReference type="ProteomicsDB" id="642"/>
<dbReference type="Pumba" id="A4D2B0"/>
<dbReference type="Antibodypedia" id="71061">
    <property type="antibodies" value="16 antibodies from 9 providers"/>
</dbReference>
<dbReference type="DNASU" id="255374"/>
<dbReference type="Ensembl" id="ENST00000398075.4">
    <property type="protein sequence ID" value="ENSP00000381150.2"/>
    <property type="gene ID" value="ENSG00000214309.5"/>
</dbReference>
<dbReference type="GeneID" id="255374"/>
<dbReference type="KEGG" id="hsa:255374"/>
<dbReference type="MANE-Select" id="ENST00000398075.4">
    <property type="protein sequence ID" value="ENSP00000381150.2"/>
    <property type="RefSeq nucleotide sequence ID" value="NM_203397.3"/>
    <property type="RefSeq protein sequence ID" value="NP_981942.1"/>
</dbReference>
<dbReference type="UCSC" id="uc003utp.4">
    <property type="organism name" value="human"/>
</dbReference>
<dbReference type="AGR" id="HGNC:22180"/>
<dbReference type="CTD" id="255374"/>
<dbReference type="DisGeNET" id="255374"/>
<dbReference type="GeneCards" id="MBLAC1"/>
<dbReference type="HGNC" id="HGNC:22180">
    <property type="gene designation" value="MBLAC1"/>
</dbReference>
<dbReference type="HPA" id="ENSG00000214309">
    <property type="expression patterns" value="Low tissue specificity"/>
</dbReference>
<dbReference type="MIM" id="620906">
    <property type="type" value="gene"/>
</dbReference>
<dbReference type="neXtProt" id="NX_A4D2B0"/>
<dbReference type="PharmGKB" id="PA164722227"/>
<dbReference type="VEuPathDB" id="HostDB:ENSG00000214309"/>
<dbReference type="eggNOG" id="KOG4736">
    <property type="taxonomic scope" value="Eukaryota"/>
</dbReference>
<dbReference type="GeneTree" id="ENSGT00390000016193"/>
<dbReference type="HOGENOM" id="CLU_030571_2_6_1"/>
<dbReference type="InParanoid" id="A4D2B0"/>
<dbReference type="OMA" id="RHVVCTH"/>
<dbReference type="OrthoDB" id="10250730at2759"/>
<dbReference type="PAN-GO" id="A4D2B0">
    <property type="GO annotations" value="0 GO annotations based on evolutionary models"/>
</dbReference>
<dbReference type="PhylomeDB" id="A4D2B0"/>
<dbReference type="TreeFam" id="TF316508"/>
<dbReference type="PathwayCommons" id="A4D2B0"/>
<dbReference type="SignaLink" id="A4D2B0"/>
<dbReference type="BioGRID-ORCS" id="255374">
    <property type="hits" value="17 hits in 1145 CRISPR screens"/>
</dbReference>
<dbReference type="GenomeRNAi" id="255374"/>
<dbReference type="Pharos" id="A4D2B0">
    <property type="development level" value="Tdark"/>
</dbReference>
<dbReference type="PRO" id="PR:A4D2B0"/>
<dbReference type="Proteomes" id="UP000005640">
    <property type="component" value="Chromosome 7"/>
</dbReference>
<dbReference type="RNAct" id="A4D2B0">
    <property type="molecule type" value="protein"/>
</dbReference>
<dbReference type="Bgee" id="ENSG00000214309">
    <property type="expression patterns" value="Expressed in male germ line stem cell (sensu Vertebrata) in testis and 118 other cell types or tissues"/>
</dbReference>
<dbReference type="ExpressionAtlas" id="A4D2B0">
    <property type="expression patterns" value="baseline and differential"/>
</dbReference>
<dbReference type="GO" id="GO:0005737">
    <property type="term" value="C:cytoplasm"/>
    <property type="evidence" value="ECO:0000314"/>
    <property type="project" value="UniProtKB"/>
</dbReference>
<dbReference type="GO" id="GO:0005829">
    <property type="term" value="C:cytosol"/>
    <property type="evidence" value="ECO:0007669"/>
    <property type="project" value="UniProtKB-SubCell"/>
</dbReference>
<dbReference type="GO" id="GO:0005634">
    <property type="term" value="C:nucleus"/>
    <property type="evidence" value="ECO:0000314"/>
    <property type="project" value="UniProtKB"/>
</dbReference>
<dbReference type="GO" id="GO:0046872">
    <property type="term" value="F:metal ion binding"/>
    <property type="evidence" value="ECO:0000314"/>
    <property type="project" value="UniProtKB"/>
</dbReference>
<dbReference type="GO" id="GO:0004521">
    <property type="term" value="F:RNA endonuclease activity"/>
    <property type="evidence" value="ECO:0000315"/>
    <property type="project" value="UniProtKB"/>
</dbReference>
<dbReference type="GO" id="GO:0008334">
    <property type="term" value="P:histone mRNA metabolic process"/>
    <property type="evidence" value="ECO:0000315"/>
    <property type="project" value="UniProtKB"/>
</dbReference>
<dbReference type="GO" id="GO:0031124">
    <property type="term" value="P:mRNA 3'-end processing"/>
    <property type="evidence" value="ECO:0000315"/>
    <property type="project" value="UniProtKB"/>
</dbReference>
<dbReference type="GO" id="GO:1900087">
    <property type="term" value="P:positive regulation of G1/S transition of mitotic cell cycle"/>
    <property type="evidence" value="ECO:0000315"/>
    <property type="project" value="UniProtKB"/>
</dbReference>
<dbReference type="CDD" id="cd07711">
    <property type="entry name" value="MBLAC1-like_MBL-fold"/>
    <property type="match status" value="1"/>
</dbReference>
<dbReference type="Gene3D" id="3.60.15.10">
    <property type="entry name" value="Ribonuclease Z/Hydroxyacylglutathione hydrolase-like"/>
    <property type="match status" value="1"/>
</dbReference>
<dbReference type="InterPro" id="IPR039344">
    <property type="entry name" value="MBLAC1"/>
</dbReference>
<dbReference type="InterPro" id="IPR001279">
    <property type="entry name" value="Metallo-B-lactamas"/>
</dbReference>
<dbReference type="InterPro" id="IPR036866">
    <property type="entry name" value="RibonucZ/Hydroxyglut_hydro"/>
</dbReference>
<dbReference type="PANTHER" id="PTHR23200">
    <property type="entry name" value="METALLO-BETA-LACTAMASE DOMAIN-CONTAINING PROTEIN 1"/>
    <property type="match status" value="1"/>
</dbReference>
<dbReference type="PANTHER" id="PTHR23200:SF48">
    <property type="entry name" value="METALLO-BETA-LACTAMASE DOMAIN-CONTAINING PROTEIN 1"/>
    <property type="match status" value="1"/>
</dbReference>
<dbReference type="Pfam" id="PF00753">
    <property type="entry name" value="Lactamase_B"/>
    <property type="match status" value="1"/>
</dbReference>
<dbReference type="SMART" id="SM00849">
    <property type="entry name" value="Lactamase_B"/>
    <property type="match status" value="1"/>
</dbReference>
<dbReference type="SUPFAM" id="SSF56281">
    <property type="entry name" value="Metallo-hydrolase/oxidoreductase"/>
    <property type="match status" value="1"/>
</dbReference>
<organism>
    <name type="scientific">Homo sapiens</name>
    <name type="common">Human</name>
    <dbReference type="NCBI Taxonomy" id="9606"/>
    <lineage>
        <taxon>Eukaryota</taxon>
        <taxon>Metazoa</taxon>
        <taxon>Chordata</taxon>
        <taxon>Craniata</taxon>
        <taxon>Vertebrata</taxon>
        <taxon>Euteleostomi</taxon>
        <taxon>Mammalia</taxon>
        <taxon>Eutheria</taxon>
        <taxon>Euarchontoglires</taxon>
        <taxon>Primates</taxon>
        <taxon>Haplorrhini</taxon>
        <taxon>Catarrhini</taxon>
        <taxon>Hominidae</taxon>
        <taxon>Homo</taxon>
    </lineage>
</organism>
<sequence length="266" mass="27202">MRTEPLCGASPLLVPGDPYSVVVLLQGYAEPEGVGDAVRADGSVTLVLPQTRGPASSHRESPRGSGGAEAALEEAARGPILVDTGGPWAREALLGALAGQGVAPGDVTLVVGTHGHSDHIGNLGLFPGAALLVSHDFCLPGGRYLPHGLGEGQPLRLGPGLEVWATPGHGGQRDVSVVVAGTALGTVVVAGDVFERDGDEDSWQALSEDPAAQERSRKRVLVVADVVVPGHGPPFRVLREASQPETEGGGNSQQEPVVGDEEPALH</sequence>
<comment type="function">
    <text evidence="3">Endoribonuclease that catalyzes the hydrolysis of histone-coding pre-mRNA 3'-end. Involved in histone pre-mRNA processing during the S-phase of the cell cycle, which is required for entering/progressing through S-phase (PubMed:30507380). Cleaves histone pre-mRNA at a major and a minor cleavage site after the 5'-ACCCA-3' and the 5'-ACCCACA-3' sequence, respectively, and located downstream of the stem-loop (PubMed:30507380). May require the presence of the HDE element located at the histone pre-RNA 3'-end to avoid non-specific cleavage (PubMed:30507380).</text>
</comment>
<comment type="catalytic activity">
    <reaction evidence="3">
        <text>a ribonucleotidyl-ribonucleotide-RNA + H2O = a 3'-end ribonucleotide-RNA + a 5'-end 5'-phospho-ribonucleoside-RNA + H(+)</text>
        <dbReference type="Rhea" id="RHEA:68096"/>
        <dbReference type="Rhea" id="RHEA-COMP:15179"/>
        <dbReference type="Rhea" id="RHEA-COMP:17355"/>
        <dbReference type="Rhea" id="RHEA-COMP:17428"/>
        <dbReference type="ChEBI" id="CHEBI:15377"/>
        <dbReference type="ChEBI" id="CHEBI:15378"/>
        <dbReference type="ChEBI" id="CHEBI:74896"/>
        <dbReference type="ChEBI" id="CHEBI:138282"/>
        <dbReference type="ChEBI" id="CHEBI:173118"/>
    </reaction>
    <physiologicalReaction direction="left-to-right" evidence="5">
        <dbReference type="Rhea" id="RHEA:68097"/>
    </physiologicalReaction>
</comment>
<comment type="cofactor">
    <cofactor evidence="3">
        <name>Zn(2+)</name>
        <dbReference type="ChEBI" id="CHEBI:29105"/>
    </cofactor>
    <text evidence="5">Binds 2 Zn(2+) ions per subunit.</text>
</comment>
<comment type="subunit">
    <text evidence="3">Homodimer.</text>
</comment>
<comment type="interaction">
    <interactant intactId="EBI-21014821">
        <id>A4D2B0</id>
    </interactant>
    <interactant intactId="EBI-12383084">
        <id>Q75WM6</id>
        <label>H1-7</label>
    </interactant>
    <organismsDiffer>false</organismsDiffer>
    <experiments>2</experiments>
</comment>
<comment type="subcellular location">
    <subcellularLocation>
        <location evidence="3">Cytoplasm</location>
        <location evidence="3">Cytosol</location>
    </subcellularLocation>
    <subcellularLocation>
        <location evidence="3">Nucleus</location>
    </subcellularLocation>
    <text evidence="3">Localizes in the nucleus during early S-phase of the cell cycle.</text>
</comment>
<comment type="domain">
    <text evidence="3">Contains four of the five characteristic MBL-fold metal-binding motifs, with two waters completing metal coordination.</text>
</comment>
<comment type="similarity">
    <text evidence="4">Belongs to the metallo-beta-lactamase superfamily. Glyoxalase II family.</text>
</comment>
<gene>
    <name evidence="6" type="primary">MBLAC1</name>
</gene>
<name>MBLC1_HUMAN</name>
<proteinExistence type="evidence at protein level"/>
<accession>A4D2B0</accession>
<accession>Q8N5X8</accession>